<protein>
    <recommendedName>
        <fullName>Heme exporter protein D</fullName>
    </recommendedName>
    <alternativeName>
        <fullName>Cytochrome c-type biogenesis protein CcmD</fullName>
    </alternativeName>
</protein>
<reference key="1">
    <citation type="journal article" date="2001" name="Nature">
        <title>Genome sequence of enterohaemorrhagic Escherichia coli O157:H7.</title>
        <authorList>
            <person name="Perna N.T."/>
            <person name="Plunkett G. III"/>
            <person name="Burland V."/>
            <person name="Mau B."/>
            <person name="Glasner J.D."/>
            <person name="Rose D.J."/>
            <person name="Mayhew G.F."/>
            <person name="Evans P.S."/>
            <person name="Gregor J."/>
            <person name="Kirkpatrick H.A."/>
            <person name="Posfai G."/>
            <person name="Hackett J."/>
            <person name="Klink S."/>
            <person name="Boutin A."/>
            <person name="Shao Y."/>
            <person name="Miller L."/>
            <person name="Grotbeck E.J."/>
            <person name="Davis N.W."/>
            <person name="Lim A."/>
            <person name="Dimalanta E.T."/>
            <person name="Potamousis K."/>
            <person name="Apodaca J."/>
            <person name="Anantharaman T.S."/>
            <person name="Lin J."/>
            <person name="Yen G."/>
            <person name="Schwartz D.C."/>
            <person name="Welch R.A."/>
            <person name="Blattner F.R."/>
        </authorList>
    </citation>
    <scope>NUCLEOTIDE SEQUENCE [LARGE SCALE GENOMIC DNA]</scope>
    <source>
        <strain>O157:H7 / EDL933 / ATCC 700927 / EHEC</strain>
    </source>
</reference>
<reference key="2">
    <citation type="journal article" date="2001" name="DNA Res.">
        <title>Complete genome sequence of enterohemorrhagic Escherichia coli O157:H7 and genomic comparison with a laboratory strain K-12.</title>
        <authorList>
            <person name="Hayashi T."/>
            <person name="Makino K."/>
            <person name="Ohnishi M."/>
            <person name="Kurokawa K."/>
            <person name="Ishii K."/>
            <person name="Yokoyama K."/>
            <person name="Han C.-G."/>
            <person name="Ohtsubo E."/>
            <person name="Nakayama K."/>
            <person name="Murata T."/>
            <person name="Tanaka M."/>
            <person name="Tobe T."/>
            <person name="Iida T."/>
            <person name="Takami H."/>
            <person name="Honda T."/>
            <person name="Sasakawa C."/>
            <person name="Ogasawara N."/>
            <person name="Yasunaga T."/>
            <person name="Kuhara S."/>
            <person name="Shiba T."/>
            <person name="Hattori M."/>
            <person name="Shinagawa H."/>
        </authorList>
    </citation>
    <scope>NUCLEOTIDE SEQUENCE [LARGE SCALE GENOMIC DNA]</scope>
    <source>
        <strain>O157:H7 / Sakai / RIMD 0509952 / EHEC</strain>
    </source>
</reference>
<name>CCMD_ECO57</name>
<feature type="chain" id="PRO_0000201564" description="Heme exporter protein D">
    <location>
        <begin position="1"/>
        <end position="69"/>
    </location>
</feature>
<feature type="transmembrane region" description="Helical" evidence="2">
    <location>
        <begin position="18"/>
        <end position="37"/>
    </location>
</feature>
<sequence>MTPAFASWNEFFAMGGYAFFVWLAVVMTVIPLVVLVVHSVMQHRAILRGVAQQRAREARLRAAQQQEAA</sequence>
<dbReference type="EMBL" id="AE005174">
    <property type="protein sequence ID" value="AAG57333.1"/>
    <property type="molecule type" value="Genomic_DNA"/>
</dbReference>
<dbReference type="EMBL" id="BA000007">
    <property type="protein sequence ID" value="BAB36510.1"/>
    <property type="molecule type" value="Genomic_DNA"/>
</dbReference>
<dbReference type="PIR" id="A85859">
    <property type="entry name" value="A85859"/>
</dbReference>
<dbReference type="PIR" id="G91014">
    <property type="entry name" value="G91014"/>
</dbReference>
<dbReference type="RefSeq" id="NP_311114.1">
    <property type="nucleotide sequence ID" value="NC_002695.1"/>
</dbReference>
<dbReference type="RefSeq" id="WP_000186540.1">
    <property type="nucleotide sequence ID" value="NZ_VOAI01000001.1"/>
</dbReference>
<dbReference type="SMR" id="P0ABM7"/>
<dbReference type="STRING" id="155864.Z3455"/>
<dbReference type="TCDB" id="3.A.1.107.3">
    <property type="family name" value="the atp-binding cassette (abc) superfamily"/>
</dbReference>
<dbReference type="GeneID" id="916793"/>
<dbReference type="GeneID" id="93774980"/>
<dbReference type="KEGG" id="ece:Z3455"/>
<dbReference type="KEGG" id="ecs:ECs_3087"/>
<dbReference type="PATRIC" id="fig|386585.9.peg.3221"/>
<dbReference type="eggNOG" id="COG3114">
    <property type="taxonomic scope" value="Bacteria"/>
</dbReference>
<dbReference type="HOGENOM" id="CLU_180892_0_0_6"/>
<dbReference type="OMA" id="MFFQSWS"/>
<dbReference type="Proteomes" id="UP000000558">
    <property type="component" value="Chromosome"/>
</dbReference>
<dbReference type="Proteomes" id="UP000002519">
    <property type="component" value="Chromosome"/>
</dbReference>
<dbReference type="GO" id="GO:0005886">
    <property type="term" value="C:plasma membrane"/>
    <property type="evidence" value="ECO:0007669"/>
    <property type="project" value="UniProtKB-SubCell"/>
</dbReference>
<dbReference type="GO" id="GO:1903607">
    <property type="term" value="P:cytochrome c biosynthetic process"/>
    <property type="evidence" value="ECO:0007669"/>
    <property type="project" value="TreeGrafter"/>
</dbReference>
<dbReference type="GO" id="GO:0017004">
    <property type="term" value="P:cytochrome complex assembly"/>
    <property type="evidence" value="ECO:0007669"/>
    <property type="project" value="UniProtKB-KW"/>
</dbReference>
<dbReference type="GO" id="GO:0015886">
    <property type="term" value="P:heme transport"/>
    <property type="evidence" value="ECO:0007669"/>
    <property type="project" value="InterPro"/>
</dbReference>
<dbReference type="InterPro" id="IPR007078">
    <property type="entry name" value="Haem_export_protD_CcmD"/>
</dbReference>
<dbReference type="InterPro" id="IPR052075">
    <property type="entry name" value="Heme_exporter_D"/>
</dbReference>
<dbReference type="NCBIfam" id="TIGR03141">
    <property type="entry name" value="cytochro_ccmD"/>
    <property type="match status" value="1"/>
</dbReference>
<dbReference type="PANTHER" id="PTHR37531">
    <property type="entry name" value="HEME EXPORTER PROTEIN D"/>
    <property type="match status" value="1"/>
</dbReference>
<dbReference type="PANTHER" id="PTHR37531:SF1">
    <property type="entry name" value="HEME EXPORTER PROTEIN D"/>
    <property type="match status" value="1"/>
</dbReference>
<dbReference type="Pfam" id="PF04995">
    <property type="entry name" value="CcmD"/>
    <property type="match status" value="1"/>
</dbReference>
<comment type="function">
    <text evidence="1">Required for the export of heme to the periplasm for the biogenesis of c-type cytochromes.</text>
</comment>
<comment type="subcellular location">
    <subcellularLocation>
        <location evidence="3">Cell inner membrane</location>
        <topology evidence="3">Single-pass membrane protein</topology>
    </subcellularLocation>
</comment>
<comment type="similarity">
    <text evidence="3">Belongs to the CcmD/CycX/HelD family.</text>
</comment>
<evidence type="ECO:0000250" key="1"/>
<evidence type="ECO:0000255" key="2"/>
<evidence type="ECO:0000305" key="3"/>
<keyword id="KW-0997">Cell inner membrane</keyword>
<keyword id="KW-1003">Cell membrane</keyword>
<keyword id="KW-0201">Cytochrome c-type biogenesis</keyword>
<keyword id="KW-0472">Membrane</keyword>
<keyword id="KW-1185">Reference proteome</keyword>
<keyword id="KW-0812">Transmembrane</keyword>
<keyword id="KW-1133">Transmembrane helix</keyword>
<keyword id="KW-0813">Transport</keyword>
<gene>
    <name type="primary">ccmD</name>
    <name type="ordered locus">Z3455</name>
    <name type="ordered locus">ECs3087</name>
</gene>
<organism>
    <name type="scientific">Escherichia coli O157:H7</name>
    <dbReference type="NCBI Taxonomy" id="83334"/>
    <lineage>
        <taxon>Bacteria</taxon>
        <taxon>Pseudomonadati</taxon>
        <taxon>Pseudomonadota</taxon>
        <taxon>Gammaproteobacteria</taxon>
        <taxon>Enterobacterales</taxon>
        <taxon>Enterobacteriaceae</taxon>
        <taxon>Escherichia</taxon>
    </lineage>
</organism>
<proteinExistence type="inferred from homology"/>
<accession>P0ABM7</accession>
<accession>P36770</accession>